<protein>
    <recommendedName>
        <fullName>HTH-type transcriptional regulator SACOL2593</fullName>
    </recommendedName>
</protein>
<reference key="1">
    <citation type="journal article" date="2005" name="J. Bacteriol.">
        <title>Insights on evolution of virulence and resistance from the complete genome analysis of an early methicillin-resistant Staphylococcus aureus strain and a biofilm-producing methicillin-resistant Staphylococcus epidermidis strain.</title>
        <authorList>
            <person name="Gill S.R."/>
            <person name="Fouts D.E."/>
            <person name="Archer G.L."/>
            <person name="Mongodin E.F."/>
            <person name="DeBoy R.T."/>
            <person name="Ravel J."/>
            <person name="Paulsen I.T."/>
            <person name="Kolonay J.F."/>
            <person name="Brinkac L.M."/>
            <person name="Beanan M.J."/>
            <person name="Dodson R.J."/>
            <person name="Daugherty S.C."/>
            <person name="Madupu R."/>
            <person name="Angiuoli S.V."/>
            <person name="Durkin A.S."/>
            <person name="Haft D.H."/>
            <person name="Vamathevan J.J."/>
            <person name="Khouri H."/>
            <person name="Utterback T.R."/>
            <person name="Lee C."/>
            <person name="Dimitrov G."/>
            <person name="Jiang L."/>
            <person name="Qin H."/>
            <person name="Weidman J."/>
            <person name="Tran K."/>
            <person name="Kang K.H."/>
            <person name="Hance I.R."/>
            <person name="Nelson K.E."/>
            <person name="Fraser C.M."/>
        </authorList>
    </citation>
    <scope>NUCLEOTIDE SEQUENCE [LARGE SCALE GENOMIC DNA]</scope>
    <source>
        <strain>COL</strain>
    </source>
</reference>
<proteinExistence type="predicted"/>
<feature type="chain" id="PRO_0000286690" description="HTH-type transcriptional regulator SACOL2593">
    <location>
        <begin position="1"/>
        <end position="185"/>
    </location>
</feature>
<feature type="domain" description="HTH tetR-type" evidence="1">
    <location>
        <begin position="6"/>
        <end position="66"/>
    </location>
</feature>
<feature type="DNA-binding region" description="H-T-H motif" evidence="1">
    <location>
        <begin position="29"/>
        <end position="48"/>
    </location>
</feature>
<dbReference type="EMBL" id="CP000046">
    <property type="protein sequence ID" value="AAW38594.1"/>
    <property type="molecule type" value="Genomic_DNA"/>
</dbReference>
<dbReference type="RefSeq" id="WP_001224188.1">
    <property type="nucleotide sequence ID" value="NZ_JBGOFO010000001.1"/>
</dbReference>
<dbReference type="SMR" id="Q5HCX3"/>
<dbReference type="KEGG" id="sac:SACOL2593"/>
<dbReference type="HOGENOM" id="CLU_069356_17_2_9"/>
<dbReference type="Proteomes" id="UP000000530">
    <property type="component" value="Chromosome"/>
</dbReference>
<dbReference type="GO" id="GO:0003677">
    <property type="term" value="F:DNA binding"/>
    <property type="evidence" value="ECO:0007669"/>
    <property type="project" value="UniProtKB-KW"/>
</dbReference>
<dbReference type="Gene3D" id="1.10.357.10">
    <property type="entry name" value="Tetracycline Repressor, domain 2"/>
    <property type="match status" value="1"/>
</dbReference>
<dbReference type="InterPro" id="IPR023772">
    <property type="entry name" value="DNA-bd_HTH_TetR-type_CS"/>
</dbReference>
<dbReference type="InterPro" id="IPR009057">
    <property type="entry name" value="Homeodomain-like_sf"/>
</dbReference>
<dbReference type="InterPro" id="IPR050624">
    <property type="entry name" value="HTH-type_Tx_Regulator"/>
</dbReference>
<dbReference type="InterPro" id="IPR001647">
    <property type="entry name" value="HTH_TetR"/>
</dbReference>
<dbReference type="PANTHER" id="PTHR43479">
    <property type="entry name" value="ACREF/ENVCD OPERON REPRESSOR-RELATED"/>
    <property type="match status" value="1"/>
</dbReference>
<dbReference type="PANTHER" id="PTHR43479:SF11">
    <property type="entry name" value="ACREF_ENVCD OPERON REPRESSOR-RELATED"/>
    <property type="match status" value="1"/>
</dbReference>
<dbReference type="Pfam" id="PF00440">
    <property type="entry name" value="TetR_N"/>
    <property type="match status" value="1"/>
</dbReference>
<dbReference type="PRINTS" id="PR00455">
    <property type="entry name" value="HTHTETR"/>
</dbReference>
<dbReference type="SUPFAM" id="SSF46689">
    <property type="entry name" value="Homeodomain-like"/>
    <property type="match status" value="1"/>
</dbReference>
<dbReference type="PROSITE" id="PS01081">
    <property type="entry name" value="HTH_TETR_1"/>
    <property type="match status" value="1"/>
</dbReference>
<dbReference type="PROSITE" id="PS50977">
    <property type="entry name" value="HTH_TETR_2"/>
    <property type="match status" value="1"/>
</dbReference>
<accession>Q5HCX3</accession>
<keyword id="KW-0238">DNA-binding</keyword>
<keyword id="KW-0804">Transcription</keyword>
<keyword id="KW-0805">Transcription regulation</keyword>
<name>Y2593_STAAC</name>
<sequence>MRKDAKENRQRIEEIAHKLFDEEGVENISMNRIAKELGIGMGTLYRHFKDKSDLCYYVIQRDLDIFITHFKQIKDDYHSNYEVMQVSLDYLLQFKIDNKALLQCIEAGNNKLRFYQSAFYQELFDFYYDLFKSDDDTYTKFKTDMLLQSLSTSVFAFQIEHRHISIEAYRNYLLNIYLDEVGRND</sequence>
<gene>
    <name type="ordered locus">SACOL2593</name>
</gene>
<organism>
    <name type="scientific">Staphylococcus aureus (strain COL)</name>
    <dbReference type="NCBI Taxonomy" id="93062"/>
    <lineage>
        <taxon>Bacteria</taxon>
        <taxon>Bacillati</taxon>
        <taxon>Bacillota</taxon>
        <taxon>Bacilli</taxon>
        <taxon>Bacillales</taxon>
        <taxon>Staphylococcaceae</taxon>
        <taxon>Staphylococcus</taxon>
    </lineage>
</organism>
<evidence type="ECO:0000255" key="1">
    <source>
        <dbReference type="PROSITE-ProRule" id="PRU00335"/>
    </source>
</evidence>